<sequence length="158" mass="17219">MFRIGQGFDVHEFAEGRPLIIGGITIPHEKGLIGHSDADVLLHTIADACLGAIAAGDIGKHFPDTDPAFKDADSAVLLQKVWEFVREQGYELGNLDCTIIAQKPKMAPHIESMRKRISELLETSIDNINVKATTTEKLGFTGREEGIASQAVVLLQKK</sequence>
<name>ISPF_BACAC</name>
<feature type="chain" id="PRO_1000118992" description="2-C-methyl-D-erythritol 2,4-cyclodiphosphate synthase">
    <location>
        <begin position="1"/>
        <end position="158"/>
    </location>
</feature>
<feature type="binding site" evidence="1">
    <location>
        <begin position="9"/>
        <end position="11"/>
    </location>
    <ligand>
        <name>4-CDP-2-C-methyl-D-erythritol 2-phosphate</name>
        <dbReference type="ChEBI" id="CHEBI:57919"/>
    </ligand>
</feature>
<feature type="binding site" evidence="1">
    <location>
        <position position="9"/>
    </location>
    <ligand>
        <name>a divalent metal cation</name>
        <dbReference type="ChEBI" id="CHEBI:60240"/>
    </ligand>
</feature>
<feature type="binding site" evidence="1">
    <location>
        <position position="11"/>
    </location>
    <ligand>
        <name>a divalent metal cation</name>
        <dbReference type="ChEBI" id="CHEBI:60240"/>
    </ligand>
</feature>
<feature type="binding site" evidence="1">
    <location>
        <begin position="35"/>
        <end position="36"/>
    </location>
    <ligand>
        <name>4-CDP-2-C-methyl-D-erythritol 2-phosphate</name>
        <dbReference type="ChEBI" id="CHEBI:57919"/>
    </ligand>
</feature>
<feature type="binding site" evidence="1">
    <location>
        <position position="43"/>
    </location>
    <ligand>
        <name>a divalent metal cation</name>
        <dbReference type="ChEBI" id="CHEBI:60240"/>
    </ligand>
</feature>
<feature type="binding site" evidence="1">
    <location>
        <begin position="57"/>
        <end position="59"/>
    </location>
    <ligand>
        <name>4-CDP-2-C-methyl-D-erythritol 2-phosphate</name>
        <dbReference type="ChEBI" id="CHEBI:57919"/>
    </ligand>
</feature>
<feature type="binding site" evidence="1">
    <location>
        <begin position="62"/>
        <end position="66"/>
    </location>
    <ligand>
        <name>4-CDP-2-C-methyl-D-erythritol 2-phosphate</name>
        <dbReference type="ChEBI" id="CHEBI:57919"/>
    </ligand>
</feature>
<feature type="binding site" evidence="1">
    <location>
        <begin position="101"/>
        <end position="107"/>
    </location>
    <ligand>
        <name>4-CDP-2-C-methyl-D-erythritol 2-phosphate</name>
        <dbReference type="ChEBI" id="CHEBI:57919"/>
    </ligand>
</feature>
<feature type="binding site" evidence="1">
    <location>
        <begin position="133"/>
        <end position="136"/>
    </location>
    <ligand>
        <name>4-CDP-2-C-methyl-D-erythritol 2-phosphate</name>
        <dbReference type="ChEBI" id="CHEBI:57919"/>
    </ligand>
</feature>
<feature type="binding site" evidence="1">
    <location>
        <position position="140"/>
    </location>
    <ligand>
        <name>4-CDP-2-C-methyl-D-erythritol 2-phosphate</name>
        <dbReference type="ChEBI" id="CHEBI:57919"/>
    </ligand>
</feature>
<feature type="binding site" evidence="1">
    <location>
        <position position="143"/>
    </location>
    <ligand>
        <name>4-CDP-2-C-methyl-D-erythritol 2-phosphate</name>
        <dbReference type="ChEBI" id="CHEBI:57919"/>
    </ligand>
</feature>
<feature type="site" description="Transition state stabilizer" evidence="1">
    <location>
        <position position="35"/>
    </location>
</feature>
<feature type="site" description="Transition state stabilizer" evidence="1">
    <location>
        <position position="134"/>
    </location>
</feature>
<gene>
    <name evidence="1" type="primary">ispF</name>
    <name type="ordered locus">BAMEG_0102</name>
</gene>
<keyword id="KW-0414">Isoprene biosynthesis</keyword>
<keyword id="KW-0456">Lyase</keyword>
<keyword id="KW-0479">Metal-binding</keyword>
<dbReference type="EC" id="4.6.1.12" evidence="1"/>
<dbReference type="EMBL" id="CP001215">
    <property type="protein sequence ID" value="ACP17323.1"/>
    <property type="molecule type" value="Genomic_DNA"/>
</dbReference>
<dbReference type="RefSeq" id="WP_000488386.1">
    <property type="nucleotide sequence ID" value="NC_012581.1"/>
</dbReference>
<dbReference type="SMR" id="C3LJ59"/>
<dbReference type="GeneID" id="93010967"/>
<dbReference type="KEGG" id="bah:BAMEG_0102"/>
<dbReference type="HOGENOM" id="CLU_084630_2_0_9"/>
<dbReference type="UniPathway" id="UPA00056">
    <property type="reaction ID" value="UER00095"/>
</dbReference>
<dbReference type="GO" id="GO:0008685">
    <property type="term" value="F:2-C-methyl-D-erythritol 2,4-cyclodiphosphate synthase activity"/>
    <property type="evidence" value="ECO:0007669"/>
    <property type="project" value="UniProtKB-UniRule"/>
</dbReference>
<dbReference type="GO" id="GO:0046872">
    <property type="term" value="F:metal ion binding"/>
    <property type="evidence" value="ECO:0007669"/>
    <property type="project" value="UniProtKB-KW"/>
</dbReference>
<dbReference type="GO" id="GO:0019288">
    <property type="term" value="P:isopentenyl diphosphate biosynthetic process, methylerythritol 4-phosphate pathway"/>
    <property type="evidence" value="ECO:0007669"/>
    <property type="project" value="UniProtKB-UniRule"/>
</dbReference>
<dbReference type="GO" id="GO:0016114">
    <property type="term" value="P:terpenoid biosynthetic process"/>
    <property type="evidence" value="ECO:0007669"/>
    <property type="project" value="InterPro"/>
</dbReference>
<dbReference type="CDD" id="cd00554">
    <property type="entry name" value="MECDP_synthase"/>
    <property type="match status" value="1"/>
</dbReference>
<dbReference type="FunFam" id="3.30.1330.50:FF:000001">
    <property type="entry name" value="2-C-methyl-D-erythritol 2,4-cyclodiphosphate synthase"/>
    <property type="match status" value="1"/>
</dbReference>
<dbReference type="Gene3D" id="3.30.1330.50">
    <property type="entry name" value="2-C-methyl-D-erythritol 2,4-cyclodiphosphate synthase"/>
    <property type="match status" value="1"/>
</dbReference>
<dbReference type="HAMAP" id="MF_00107">
    <property type="entry name" value="IspF"/>
    <property type="match status" value="1"/>
</dbReference>
<dbReference type="InterPro" id="IPR003526">
    <property type="entry name" value="MECDP_synthase"/>
</dbReference>
<dbReference type="InterPro" id="IPR020555">
    <property type="entry name" value="MECDP_synthase_CS"/>
</dbReference>
<dbReference type="InterPro" id="IPR036571">
    <property type="entry name" value="MECDP_synthase_sf"/>
</dbReference>
<dbReference type="NCBIfam" id="TIGR00151">
    <property type="entry name" value="ispF"/>
    <property type="match status" value="1"/>
</dbReference>
<dbReference type="PANTHER" id="PTHR43181">
    <property type="entry name" value="2-C-METHYL-D-ERYTHRITOL 2,4-CYCLODIPHOSPHATE SYNTHASE, CHLOROPLASTIC"/>
    <property type="match status" value="1"/>
</dbReference>
<dbReference type="PANTHER" id="PTHR43181:SF1">
    <property type="entry name" value="2-C-METHYL-D-ERYTHRITOL 2,4-CYCLODIPHOSPHATE SYNTHASE, CHLOROPLASTIC"/>
    <property type="match status" value="1"/>
</dbReference>
<dbReference type="Pfam" id="PF02542">
    <property type="entry name" value="YgbB"/>
    <property type="match status" value="1"/>
</dbReference>
<dbReference type="SUPFAM" id="SSF69765">
    <property type="entry name" value="IpsF-like"/>
    <property type="match status" value="1"/>
</dbReference>
<dbReference type="PROSITE" id="PS01350">
    <property type="entry name" value="ISPF"/>
    <property type="match status" value="1"/>
</dbReference>
<proteinExistence type="inferred from homology"/>
<evidence type="ECO:0000255" key="1">
    <source>
        <dbReference type="HAMAP-Rule" id="MF_00107"/>
    </source>
</evidence>
<accession>C3LJ59</accession>
<organism>
    <name type="scientific">Bacillus anthracis (strain CDC 684 / NRRL 3495)</name>
    <dbReference type="NCBI Taxonomy" id="568206"/>
    <lineage>
        <taxon>Bacteria</taxon>
        <taxon>Bacillati</taxon>
        <taxon>Bacillota</taxon>
        <taxon>Bacilli</taxon>
        <taxon>Bacillales</taxon>
        <taxon>Bacillaceae</taxon>
        <taxon>Bacillus</taxon>
        <taxon>Bacillus cereus group</taxon>
    </lineage>
</organism>
<protein>
    <recommendedName>
        <fullName evidence="1">2-C-methyl-D-erythritol 2,4-cyclodiphosphate synthase</fullName>
        <shortName evidence="1">MECDP-synthase</shortName>
        <shortName evidence="1">MECPP-synthase</shortName>
        <shortName evidence="1">MECPS</shortName>
        <ecNumber evidence="1">4.6.1.12</ecNumber>
    </recommendedName>
</protein>
<comment type="function">
    <text evidence="1">Involved in the biosynthesis of isopentenyl diphosphate (IPP) and dimethylallyl diphosphate (DMAPP), two major building blocks of isoprenoid compounds. Catalyzes the conversion of 4-diphosphocytidyl-2-C-methyl-D-erythritol 2-phosphate (CDP-ME2P) to 2-C-methyl-D-erythritol 2,4-cyclodiphosphate (ME-CPP) with a corresponding release of cytidine 5-monophosphate (CMP).</text>
</comment>
<comment type="catalytic activity">
    <reaction evidence="1">
        <text>4-CDP-2-C-methyl-D-erythritol 2-phosphate = 2-C-methyl-D-erythritol 2,4-cyclic diphosphate + CMP</text>
        <dbReference type="Rhea" id="RHEA:23864"/>
        <dbReference type="ChEBI" id="CHEBI:57919"/>
        <dbReference type="ChEBI" id="CHEBI:58483"/>
        <dbReference type="ChEBI" id="CHEBI:60377"/>
        <dbReference type="EC" id="4.6.1.12"/>
    </reaction>
</comment>
<comment type="cofactor">
    <cofactor evidence="1">
        <name>a divalent metal cation</name>
        <dbReference type="ChEBI" id="CHEBI:60240"/>
    </cofactor>
    <text evidence="1">Binds 1 divalent metal cation per subunit.</text>
</comment>
<comment type="pathway">
    <text evidence="1">Isoprenoid biosynthesis; isopentenyl diphosphate biosynthesis via DXP pathway; isopentenyl diphosphate from 1-deoxy-D-xylulose 5-phosphate: step 4/6.</text>
</comment>
<comment type="subunit">
    <text evidence="1">Homotrimer.</text>
</comment>
<comment type="similarity">
    <text evidence="1">Belongs to the IspF family.</text>
</comment>
<reference key="1">
    <citation type="submission" date="2008-10" db="EMBL/GenBank/DDBJ databases">
        <title>Genome sequence of Bacillus anthracis str. CDC 684.</title>
        <authorList>
            <person name="Dodson R.J."/>
            <person name="Munk A.C."/>
            <person name="Brettin T."/>
            <person name="Bruce D."/>
            <person name="Detter C."/>
            <person name="Tapia R."/>
            <person name="Han C."/>
            <person name="Sutton G."/>
            <person name="Sims D."/>
        </authorList>
    </citation>
    <scope>NUCLEOTIDE SEQUENCE [LARGE SCALE GENOMIC DNA]</scope>
    <source>
        <strain>CDC 684 / NRRL 3495</strain>
    </source>
</reference>